<evidence type="ECO:0000250" key="1">
    <source>
        <dbReference type="UniProtKB" id="A1YYW7"/>
    </source>
</evidence>
<evidence type="ECO:0000255" key="2"/>
<evidence type="ECO:0000269" key="3">
    <source>
    </source>
</evidence>
<evidence type="ECO:0000303" key="4">
    <source>
    </source>
</evidence>
<evidence type="ECO:0000305" key="5"/>
<evidence type="ECO:0000312" key="6">
    <source>
        <dbReference type="EMBL" id="AAA74034.1"/>
    </source>
</evidence>
<evidence type="ECO:0000312" key="7">
    <source>
        <dbReference type="EMBL" id="AAV89562.1"/>
    </source>
</evidence>
<gene>
    <name evidence="6" type="primary">phoD</name>
    <name type="ordered locus">ZMO0938</name>
</gene>
<reference evidence="5 6" key="1">
    <citation type="journal article" date="1995" name="FEMS Microbiol. Lett.">
        <title>Cloning, sequencing and characterization of the alkaline phosphatase gene (phoD) from Zymomonas mobilis.</title>
        <authorList>
            <person name="Gomez P.F."/>
            <person name="Ingram L.O."/>
        </authorList>
    </citation>
    <scope>NUCLEOTIDE SEQUENCE [GENOMIC DNA]</scope>
    <scope>GENE NAME</scope>
    <scope>FUNCTION</scope>
    <scope>CATALYTIC ACTIVITY</scope>
    <scope>SUBUNIT</scope>
    <source>
        <strain evidence="6">ATCC 31821 / ZM4 / CP4</strain>
    </source>
</reference>
<reference evidence="7" key="2">
    <citation type="journal article" date="2005" name="Nat. Biotechnol.">
        <title>The genome sequence of the ethanologenic bacterium Zymomonas mobilis ZM4.</title>
        <authorList>
            <person name="Seo J.-S."/>
            <person name="Chong H."/>
            <person name="Park H.S."/>
            <person name="Yoon K.-O."/>
            <person name="Jung C."/>
            <person name="Kim J.J."/>
            <person name="Hong J.H."/>
            <person name="Kim H."/>
            <person name="Kim J.-H."/>
            <person name="Kil J.-I."/>
            <person name="Park C.J."/>
            <person name="Oh H.-M."/>
            <person name="Lee J.-S."/>
            <person name="Jin S.-J."/>
            <person name="Um H.-W."/>
            <person name="Lee H.-J."/>
            <person name="Oh S.-J."/>
            <person name="Kim J.Y."/>
            <person name="Kang H.L."/>
            <person name="Lee S.Y."/>
            <person name="Lee K.J."/>
            <person name="Kang H.S."/>
        </authorList>
    </citation>
    <scope>NUCLEOTIDE SEQUENCE [LARGE SCALE GENOMIC DNA]</scope>
    <source>
        <strain>ATCC 31821 / ZM4 / CP4</strain>
    </source>
</reference>
<name>ALPH_ZYMMO</name>
<comment type="function">
    <text evidence="3">Alkaline phosphatase with broad substrate specificity. Has phosphatase activity towards nucleotide and sugar phosphates with a preference to nucleotide phosphates. Has no phosphodiesterase activity.</text>
</comment>
<comment type="catalytic activity">
    <reaction evidence="3">
        <text>a phosphate monoester + H2O = an alcohol + phosphate</text>
        <dbReference type="Rhea" id="RHEA:15017"/>
        <dbReference type="ChEBI" id="CHEBI:15377"/>
        <dbReference type="ChEBI" id="CHEBI:30879"/>
        <dbReference type="ChEBI" id="CHEBI:43474"/>
        <dbReference type="ChEBI" id="CHEBI:67140"/>
        <dbReference type="EC" id="3.1.3.1"/>
    </reaction>
</comment>
<comment type="cofactor">
    <cofactor evidence="1">
        <name>Zn(2+)</name>
        <dbReference type="ChEBI" id="CHEBI:29105"/>
    </cofactor>
    <text evidence="1">Binds 2 Zn(2+) ions.</text>
</comment>
<comment type="subunit">
    <text evidence="3">Monomer.</text>
</comment>
<accession>Q5NNZ8</accession>
<accession>Q60113</accession>
<keyword id="KW-1015">Disulfide bond</keyword>
<keyword id="KW-0378">Hydrolase</keyword>
<keyword id="KW-0479">Metal-binding</keyword>
<keyword id="KW-0597">Phosphoprotein</keyword>
<keyword id="KW-1185">Reference proteome</keyword>
<keyword id="KW-0732">Signal</keyword>
<keyword id="KW-0862">Zinc</keyword>
<protein>
    <recommendedName>
        <fullName evidence="4 6">Alkaline phosphatase PhoD</fullName>
        <shortName evidence="4">ALPI</shortName>
        <ecNumber evidence="6">3.1.3.1</ecNumber>
    </recommendedName>
    <alternativeName>
        <fullName evidence="7">Type I phosphodiesterase/nucleotide pyrophosphatase</fullName>
    </alternativeName>
</protein>
<feature type="signal peptide" evidence="2">
    <location>
        <begin position="1"/>
        <end position="32"/>
    </location>
</feature>
<feature type="chain" id="PRO_5000559515" description="Alkaline phosphatase PhoD" evidence="2">
    <location>
        <begin position="33"/>
        <end position="576"/>
    </location>
</feature>
<feature type="active site" description="Phosphothreonine intermediate" evidence="1">
    <location>
        <position position="107"/>
    </location>
</feature>
<feature type="binding site" evidence="1">
    <location>
        <position position="68"/>
    </location>
    <ligand>
        <name>Zn(2+)</name>
        <dbReference type="ChEBI" id="CHEBI:29105"/>
        <label>1</label>
    </ligand>
</feature>
<feature type="binding site" evidence="1">
    <location>
        <position position="107"/>
    </location>
    <ligand>
        <name>Zn(2+)</name>
        <dbReference type="ChEBI" id="CHEBI:29105"/>
        <label>1</label>
    </ligand>
</feature>
<feature type="binding site" evidence="1">
    <location>
        <position position="128"/>
    </location>
    <ligand>
        <name>substrate</name>
    </ligand>
</feature>
<feature type="binding site" evidence="1">
    <location>
        <begin position="188"/>
        <end position="190"/>
    </location>
    <ligand>
        <name>substrate</name>
    </ligand>
</feature>
<feature type="binding site" evidence="1">
    <location>
        <position position="318"/>
    </location>
    <ligand>
        <name>Zn(2+)</name>
        <dbReference type="ChEBI" id="CHEBI:29105"/>
        <label>2</label>
    </ligand>
</feature>
<feature type="binding site" evidence="1">
    <location>
        <position position="322"/>
    </location>
    <ligand>
        <name>Zn(2+)</name>
        <dbReference type="ChEBI" id="CHEBI:29105"/>
        <label>2</label>
    </ligand>
</feature>
<feature type="binding site" evidence="1">
    <location>
        <position position="363"/>
    </location>
    <ligand>
        <name>Zn(2+)</name>
        <dbReference type="ChEBI" id="CHEBI:29105"/>
        <label>1</label>
    </ligand>
</feature>
<feature type="binding site" evidence="1">
    <location>
        <position position="364"/>
    </location>
    <ligand>
        <name>Zn(2+)</name>
        <dbReference type="ChEBI" id="CHEBI:29105"/>
        <label>1</label>
    </ligand>
</feature>
<feature type="binding site" evidence="1">
    <location>
        <position position="508"/>
    </location>
    <ligand>
        <name>Zn(2+)</name>
        <dbReference type="ChEBI" id="CHEBI:29105"/>
        <label>2</label>
    </ligand>
</feature>
<feature type="disulfide bond" evidence="1">
    <location>
        <begin position="108"/>
        <end position="144"/>
    </location>
</feature>
<feature type="disulfide bond" evidence="1">
    <location>
        <begin position="248"/>
        <end position="332"/>
    </location>
</feature>
<feature type="disulfide bond" evidence="1">
    <location>
        <begin position="562"/>
        <end position="573"/>
    </location>
</feature>
<feature type="sequence conflict" description="In Ref. 1; AAA74034." evidence="5" ref="1">
    <original>Q</original>
    <variation>K</variation>
    <location>
        <position position="158"/>
    </location>
</feature>
<feature type="sequence conflict" description="In Ref. 1; AAA74034." evidence="5" ref="1">
    <original>V</original>
    <variation>A</variation>
    <location>
        <position position="223"/>
    </location>
</feature>
<feature type="sequence conflict" description="In Ref. 1; AAA74034." evidence="5" ref="1">
    <original>F</original>
    <variation>L</variation>
    <location>
        <position position="235"/>
    </location>
</feature>
<feature type="sequence conflict" description="In Ref. 1; AAA74034." evidence="5" ref="1">
    <original>A</original>
    <variation>T</variation>
    <location>
        <position position="272"/>
    </location>
</feature>
<feature type="sequence conflict" description="In Ref. 1; AAA74034." evidence="5" ref="1">
    <original>R</original>
    <variation>K</variation>
    <location>
        <position position="396"/>
    </location>
</feature>
<feature type="sequence conflict" description="In Ref. 1; AAA74034." evidence="5" ref="1">
    <original>Y</original>
    <variation>H</variation>
    <location>
        <position position="461"/>
    </location>
</feature>
<feature type="sequence conflict" description="In Ref. 1; AAA74034." evidence="5" ref="1">
    <original>K</original>
    <variation>E</variation>
    <location>
        <position position="476"/>
    </location>
</feature>
<dbReference type="EC" id="3.1.3.1" evidence="6"/>
<dbReference type="EMBL" id="L36230">
    <property type="protein sequence ID" value="AAA74034.1"/>
    <property type="molecule type" value="Genomic_DNA"/>
</dbReference>
<dbReference type="EMBL" id="AE008692">
    <property type="protein sequence ID" value="AAV89562.1"/>
    <property type="molecule type" value="Genomic_DNA"/>
</dbReference>
<dbReference type="RefSeq" id="WP_011240797.1">
    <property type="nucleotide sequence ID" value="NZ_CP035711.1"/>
</dbReference>
<dbReference type="SMR" id="Q5NNZ8"/>
<dbReference type="STRING" id="264203.ZMO0938"/>
<dbReference type="KEGG" id="zmo:ZMO0938"/>
<dbReference type="eggNOG" id="COG1524">
    <property type="taxonomic scope" value="Bacteria"/>
</dbReference>
<dbReference type="HOGENOM" id="CLU_034095_0_0_5"/>
<dbReference type="Proteomes" id="UP000001173">
    <property type="component" value="Chromosome"/>
</dbReference>
<dbReference type="GO" id="GO:0004035">
    <property type="term" value="F:alkaline phosphatase activity"/>
    <property type="evidence" value="ECO:0007669"/>
    <property type="project" value="UniProtKB-EC"/>
</dbReference>
<dbReference type="GO" id="GO:0046872">
    <property type="term" value="F:metal ion binding"/>
    <property type="evidence" value="ECO:0007669"/>
    <property type="project" value="UniProtKB-KW"/>
</dbReference>
<dbReference type="CDD" id="cd16016">
    <property type="entry name" value="AP-SPAP"/>
    <property type="match status" value="1"/>
</dbReference>
<dbReference type="Gene3D" id="3.30.1360.150">
    <property type="match status" value="1"/>
</dbReference>
<dbReference type="Gene3D" id="3.40.720.10">
    <property type="entry name" value="Alkaline Phosphatase, subunit A"/>
    <property type="match status" value="1"/>
</dbReference>
<dbReference type="InterPro" id="IPR017850">
    <property type="entry name" value="Alkaline_phosphatase_core_sf"/>
</dbReference>
<dbReference type="InterPro" id="IPR026263">
    <property type="entry name" value="Alkaline_phosphatase_prok"/>
</dbReference>
<dbReference type="InterPro" id="IPR002591">
    <property type="entry name" value="Phosphodiest/P_Trfase"/>
</dbReference>
<dbReference type="PANTHER" id="PTHR10151:SF120">
    <property type="entry name" value="BIS(5'-ADENOSYL)-TRIPHOSPHATASE"/>
    <property type="match status" value="1"/>
</dbReference>
<dbReference type="PANTHER" id="PTHR10151">
    <property type="entry name" value="ECTONUCLEOTIDE PYROPHOSPHATASE/PHOSPHODIESTERASE"/>
    <property type="match status" value="1"/>
</dbReference>
<dbReference type="Pfam" id="PF01663">
    <property type="entry name" value="Phosphodiest"/>
    <property type="match status" value="1"/>
</dbReference>
<dbReference type="PIRSF" id="PIRSF031924">
    <property type="entry name" value="Pi-irrepressible_AP"/>
    <property type="match status" value="1"/>
</dbReference>
<dbReference type="SUPFAM" id="SSF53649">
    <property type="entry name" value="Alkaline phosphatase-like"/>
    <property type="match status" value="1"/>
</dbReference>
<sequence>MNSLLHHSFLKTVFSSLAIAIVTSSLSSVTIAATHPLDNHPKGEIAASSETAHNPWSGTRLIVAISVDQFSSDLFSEYRGRFRSGMKQLQNGVVYPMAYHSHAATETCPGHSVLLTGDHPARTGIIANNWYDFSVKRADKKVYCSEDPSLSADPQNYQPSVHYLKVPTLGDRMKKANPHSRVISVAGKDRAAIMMGGHMTDQIWFWSDNAYKTLADHKGEMPVTVKTVNEQVTRFMQQDEAPVMPSVCADHASALKIGNNRIIGLAPASRKAGDFKTFRVTPDYDRTTTDIAIGLIDELKLGHGNAPDLLTVSLSATDAVGHAYGTEGAEMCSQMAGLDDNIARIIAALDSNGVPYVLVLTADHGGQDVPERAKLRGVETAQRVDPALSPDQLSLRLAERFQLSHNQPLFFANEPQGDWYINRNLPEQTKAQLIQAAKSELSNHPQVAAVFTASELTHIPYPTRSPELWNLAERAKASFDPLRSGDLIVLLKPRVTPIAKPVSYVATHGSAWDYDRRVPIIFYTPHASGFEQPMPVETVDIMPSLAALLQIPLRKGEVDGRCLDLDPTEATTCPVK</sequence>
<organism>
    <name type="scientific">Zymomonas mobilis subsp. mobilis (strain ATCC 31821 / ZM4 / CP4)</name>
    <dbReference type="NCBI Taxonomy" id="264203"/>
    <lineage>
        <taxon>Bacteria</taxon>
        <taxon>Pseudomonadati</taxon>
        <taxon>Pseudomonadota</taxon>
        <taxon>Alphaproteobacteria</taxon>
        <taxon>Sphingomonadales</taxon>
        <taxon>Zymomonadaceae</taxon>
        <taxon>Zymomonas</taxon>
    </lineage>
</organism>
<proteinExistence type="evidence at protein level"/>